<protein>
    <recommendedName>
        <fullName evidence="1">Xylose isomerase</fullName>
        <ecNumber evidence="1">5.3.1.5</ecNumber>
    </recommendedName>
</protein>
<dbReference type="EC" id="5.3.1.5" evidence="1"/>
<dbReference type="EMBL" id="CP000577">
    <property type="protein sequence ID" value="ABN77940.1"/>
    <property type="molecule type" value="Genomic_DNA"/>
</dbReference>
<dbReference type="RefSeq" id="WP_011841913.1">
    <property type="nucleotide sequence ID" value="NC_009049.1"/>
</dbReference>
<dbReference type="SMR" id="A3PNM4"/>
<dbReference type="KEGG" id="rsh:Rsph17029_2838"/>
<dbReference type="HOGENOM" id="CLU_037261_1_0_5"/>
<dbReference type="GO" id="GO:0005737">
    <property type="term" value="C:cytoplasm"/>
    <property type="evidence" value="ECO:0007669"/>
    <property type="project" value="UniProtKB-SubCell"/>
</dbReference>
<dbReference type="GO" id="GO:0000287">
    <property type="term" value="F:magnesium ion binding"/>
    <property type="evidence" value="ECO:0007669"/>
    <property type="project" value="UniProtKB-UniRule"/>
</dbReference>
<dbReference type="GO" id="GO:0009045">
    <property type="term" value="F:xylose isomerase activity"/>
    <property type="evidence" value="ECO:0007669"/>
    <property type="project" value="UniProtKB-UniRule"/>
</dbReference>
<dbReference type="GO" id="GO:0042732">
    <property type="term" value="P:D-xylose metabolic process"/>
    <property type="evidence" value="ECO:0007669"/>
    <property type="project" value="UniProtKB-UniRule"/>
</dbReference>
<dbReference type="Gene3D" id="3.20.20.150">
    <property type="entry name" value="Divalent-metal-dependent TIM barrel enzymes"/>
    <property type="match status" value="1"/>
</dbReference>
<dbReference type="HAMAP" id="MF_00455">
    <property type="entry name" value="Xylose_isom_A"/>
    <property type="match status" value="1"/>
</dbReference>
<dbReference type="InterPro" id="IPR036237">
    <property type="entry name" value="Xyl_isomerase-like_sf"/>
</dbReference>
<dbReference type="InterPro" id="IPR013452">
    <property type="entry name" value="Xylose_isom_bac"/>
</dbReference>
<dbReference type="InterPro" id="IPR001998">
    <property type="entry name" value="Xylose_isomerase"/>
</dbReference>
<dbReference type="NCBIfam" id="NF003998">
    <property type="entry name" value="PRK05474.1"/>
    <property type="match status" value="1"/>
</dbReference>
<dbReference type="NCBIfam" id="TIGR02630">
    <property type="entry name" value="xylose_isom_A"/>
    <property type="match status" value="1"/>
</dbReference>
<dbReference type="PANTHER" id="PTHR48408">
    <property type="match status" value="1"/>
</dbReference>
<dbReference type="PANTHER" id="PTHR48408:SF1">
    <property type="entry name" value="XYLOSE ISOMERASE"/>
    <property type="match status" value="1"/>
</dbReference>
<dbReference type="PRINTS" id="PR00688">
    <property type="entry name" value="XYLOSISMRASE"/>
</dbReference>
<dbReference type="SUPFAM" id="SSF51658">
    <property type="entry name" value="Xylose isomerase-like"/>
    <property type="match status" value="1"/>
</dbReference>
<dbReference type="PROSITE" id="PS51415">
    <property type="entry name" value="XYLOSE_ISOMERASE"/>
    <property type="match status" value="1"/>
</dbReference>
<organism>
    <name type="scientific">Cereibacter sphaeroides (strain ATCC 17029 / ATH 2.4.9)</name>
    <name type="common">Rhodobacter sphaeroides</name>
    <dbReference type="NCBI Taxonomy" id="349101"/>
    <lineage>
        <taxon>Bacteria</taxon>
        <taxon>Pseudomonadati</taxon>
        <taxon>Pseudomonadota</taxon>
        <taxon>Alphaproteobacteria</taxon>
        <taxon>Rhodobacterales</taxon>
        <taxon>Paracoccaceae</taxon>
        <taxon>Cereibacter</taxon>
    </lineage>
</organism>
<name>XYLA_CERS1</name>
<evidence type="ECO:0000255" key="1">
    <source>
        <dbReference type="HAMAP-Rule" id="MF_00455"/>
    </source>
</evidence>
<comment type="catalytic activity">
    <reaction evidence="1">
        <text>alpha-D-xylose = alpha-D-xylulofuranose</text>
        <dbReference type="Rhea" id="RHEA:22816"/>
        <dbReference type="ChEBI" id="CHEBI:28518"/>
        <dbReference type="ChEBI" id="CHEBI:188998"/>
        <dbReference type="EC" id="5.3.1.5"/>
    </reaction>
</comment>
<comment type="cofactor">
    <cofactor evidence="1">
        <name>Mg(2+)</name>
        <dbReference type="ChEBI" id="CHEBI:18420"/>
    </cofactor>
    <text evidence="1">Binds 2 magnesium ions per subunit.</text>
</comment>
<comment type="subunit">
    <text evidence="1">Homotetramer.</text>
</comment>
<comment type="subcellular location">
    <subcellularLocation>
        <location evidence="1">Cytoplasm</location>
    </subcellularLocation>
</comment>
<comment type="similarity">
    <text evidence="1">Belongs to the xylose isomerase family.</text>
</comment>
<sequence>MTDFFAGIPQIRYEGEGSSNEFAFRHYNPDEVILGKRMEEHLRFAVAWWHSFAWPGGDPFGGQTFNRPWFGDTLDLAKLKADVAFEMFDILGAPFFCFHDADIRPEGATFAESKRNLEEIVDHIGTRMEGSKTKLLWGTANLFSHRRFMSGAATNPDPDVFAWSAATVKGCMDATMKLGGANYVLWGGREGYETLLNTDLTREAENAGRFLQMVVDYKHKIGFQGTILIEPKPQEPSKHQYDYDVATVYGFLKRFGLEKEVKLNIEQGHAILAGHSFEHELALAASLGILGSIDMNRNDYQSGWDTDQFPHNHPEMALAYYEILRAGGFTTGGTNFDAKIRRQSLDPEDLVLAHVGGMDTCARALKAAARLYEDGSLEAARAARYAGWETPEAQAMLASSLEEIEARVLAEGINPEPRSGRQERLENLWNRFV</sequence>
<gene>
    <name evidence="1" type="primary">xylA</name>
    <name type="ordered locus">Rsph17029_2838</name>
</gene>
<proteinExistence type="inferred from homology"/>
<feature type="chain" id="PRO_1000026452" description="Xylose isomerase">
    <location>
        <begin position="1"/>
        <end position="433"/>
    </location>
</feature>
<feature type="active site" evidence="1">
    <location>
        <position position="99"/>
    </location>
</feature>
<feature type="active site" evidence="1">
    <location>
        <position position="102"/>
    </location>
</feature>
<feature type="binding site" evidence="1">
    <location>
        <position position="230"/>
    </location>
    <ligand>
        <name>Mg(2+)</name>
        <dbReference type="ChEBI" id="CHEBI:18420"/>
        <label>1</label>
    </ligand>
</feature>
<feature type="binding site" evidence="1">
    <location>
        <position position="266"/>
    </location>
    <ligand>
        <name>Mg(2+)</name>
        <dbReference type="ChEBI" id="CHEBI:18420"/>
        <label>1</label>
    </ligand>
</feature>
<feature type="binding site" evidence="1">
    <location>
        <position position="266"/>
    </location>
    <ligand>
        <name>Mg(2+)</name>
        <dbReference type="ChEBI" id="CHEBI:18420"/>
        <label>2</label>
    </ligand>
</feature>
<feature type="binding site" evidence="1">
    <location>
        <position position="269"/>
    </location>
    <ligand>
        <name>Mg(2+)</name>
        <dbReference type="ChEBI" id="CHEBI:18420"/>
        <label>2</label>
    </ligand>
</feature>
<feature type="binding site" evidence="1">
    <location>
        <position position="294"/>
    </location>
    <ligand>
        <name>Mg(2+)</name>
        <dbReference type="ChEBI" id="CHEBI:18420"/>
        <label>1</label>
    </ligand>
</feature>
<feature type="binding site" evidence="1">
    <location>
        <position position="305"/>
    </location>
    <ligand>
        <name>Mg(2+)</name>
        <dbReference type="ChEBI" id="CHEBI:18420"/>
        <label>2</label>
    </ligand>
</feature>
<feature type="binding site" evidence="1">
    <location>
        <position position="307"/>
    </location>
    <ligand>
        <name>Mg(2+)</name>
        <dbReference type="ChEBI" id="CHEBI:18420"/>
        <label>2</label>
    </ligand>
</feature>
<feature type="binding site" evidence="1">
    <location>
        <position position="337"/>
    </location>
    <ligand>
        <name>Mg(2+)</name>
        <dbReference type="ChEBI" id="CHEBI:18420"/>
        <label>1</label>
    </ligand>
</feature>
<accession>A3PNM4</accession>
<reference key="1">
    <citation type="submission" date="2007-02" db="EMBL/GenBank/DDBJ databases">
        <title>Complete sequence of chromosome 1 of Rhodobacter sphaeroides ATCC 17029.</title>
        <authorList>
            <person name="Copeland A."/>
            <person name="Lucas S."/>
            <person name="Lapidus A."/>
            <person name="Barry K."/>
            <person name="Detter J.C."/>
            <person name="Glavina del Rio T."/>
            <person name="Hammon N."/>
            <person name="Israni S."/>
            <person name="Dalin E."/>
            <person name="Tice H."/>
            <person name="Pitluck S."/>
            <person name="Kiss H."/>
            <person name="Brettin T."/>
            <person name="Bruce D."/>
            <person name="Han C."/>
            <person name="Tapia R."/>
            <person name="Gilna P."/>
            <person name="Schmutz J."/>
            <person name="Larimer F."/>
            <person name="Land M."/>
            <person name="Hauser L."/>
            <person name="Kyrpides N."/>
            <person name="Mikhailova N."/>
            <person name="Richardson P."/>
            <person name="Mackenzie C."/>
            <person name="Choudhary M."/>
            <person name="Donohue T.J."/>
            <person name="Kaplan S."/>
        </authorList>
    </citation>
    <scope>NUCLEOTIDE SEQUENCE [LARGE SCALE GENOMIC DNA]</scope>
    <source>
        <strain>ATCC 17029 / ATH 2.4.9</strain>
    </source>
</reference>
<keyword id="KW-0119">Carbohydrate metabolism</keyword>
<keyword id="KW-0963">Cytoplasm</keyword>
<keyword id="KW-0413">Isomerase</keyword>
<keyword id="KW-0460">Magnesium</keyword>
<keyword id="KW-0479">Metal-binding</keyword>
<keyword id="KW-0859">Xylose metabolism</keyword>